<proteinExistence type="inferred from homology"/>
<gene>
    <name evidence="1" type="primary">rny</name>
    <name type="synonym">cvfA</name>
    <name type="ordered locus">SaurJH1_1372</name>
</gene>
<protein>
    <recommendedName>
        <fullName evidence="1">Ribonuclease Y</fullName>
        <shortName evidence="1">RNase Y</shortName>
        <ecNumber evidence="1">3.1.-.-</ecNumber>
    </recommendedName>
    <alternativeName>
        <fullName>Conserved virulence factor A</fullName>
    </alternativeName>
</protein>
<dbReference type="EC" id="3.1.-.-" evidence="1"/>
<dbReference type="EMBL" id="CP000736">
    <property type="protein sequence ID" value="ABR52223.1"/>
    <property type="molecule type" value="Genomic_DNA"/>
</dbReference>
<dbReference type="SMR" id="A6U1A5"/>
<dbReference type="KEGG" id="sah:SaurJH1_1372"/>
<dbReference type="HOGENOM" id="CLU_028328_1_0_9"/>
<dbReference type="GO" id="GO:0005886">
    <property type="term" value="C:plasma membrane"/>
    <property type="evidence" value="ECO:0007669"/>
    <property type="project" value="UniProtKB-SubCell"/>
</dbReference>
<dbReference type="GO" id="GO:0003723">
    <property type="term" value="F:RNA binding"/>
    <property type="evidence" value="ECO:0007669"/>
    <property type="project" value="UniProtKB-UniRule"/>
</dbReference>
<dbReference type="GO" id="GO:0004521">
    <property type="term" value="F:RNA endonuclease activity"/>
    <property type="evidence" value="ECO:0007669"/>
    <property type="project" value="UniProtKB-UniRule"/>
</dbReference>
<dbReference type="GO" id="GO:0006402">
    <property type="term" value="P:mRNA catabolic process"/>
    <property type="evidence" value="ECO:0007669"/>
    <property type="project" value="UniProtKB-UniRule"/>
</dbReference>
<dbReference type="CDD" id="cd00077">
    <property type="entry name" value="HDc"/>
    <property type="match status" value="1"/>
</dbReference>
<dbReference type="CDD" id="cd22431">
    <property type="entry name" value="KH-I_RNaseY"/>
    <property type="match status" value="1"/>
</dbReference>
<dbReference type="FunFam" id="1.10.3210.10:FF:000003">
    <property type="entry name" value="Ribonuclease Y"/>
    <property type="match status" value="1"/>
</dbReference>
<dbReference type="FunFam" id="3.30.1370.10:FF:000006">
    <property type="entry name" value="Ribonuclease Y"/>
    <property type="match status" value="1"/>
</dbReference>
<dbReference type="Gene3D" id="1.10.3210.10">
    <property type="entry name" value="Hypothetical protein af1432"/>
    <property type="match status" value="1"/>
</dbReference>
<dbReference type="Gene3D" id="3.30.1370.10">
    <property type="entry name" value="K Homology domain, type 1"/>
    <property type="match status" value="1"/>
</dbReference>
<dbReference type="HAMAP" id="MF_00335">
    <property type="entry name" value="RNase_Y"/>
    <property type="match status" value="1"/>
</dbReference>
<dbReference type="InterPro" id="IPR003607">
    <property type="entry name" value="HD/PDEase_dom"/>
</dbReference>
<dbReference type="InterPro" id="IPR006674">
    <property type="entry name" value="HD_domain"/>
</dbReference>
<dbReference type="InterPro" id="IPR006675">
    <property type="entry name" value="HDIG_dom"/>
</dbReference>
<dbReference type="InterPro" id="IPR004087">
    <property type="entry name" value="KH_dom"/>
</dbReference>
<dbReference type="InterPro" id="IPR004088">
    <property type="entry name" value="KH_dom_type_1"/>
</dbReference>
<dbReference type="InterPro" id="IPR036612">
    <property type="entry name" value="KH_dom_type_1_sf"/>
</dbReference>
<dbReference type="InterPro" id="IPR017705">
    <property type="entry name" value="Ribonuclease_Y"/>
</dbReference>
<dbReference type="InterPro" id="IPR022711">
    <property type="entry name" value="RNase_Y_N"/>
</dbReference>
<dbReference type="NCBIfam" id="TIGR00277">
    <property type="entry name" value="HDIG"/>
    <property type="match status" value="1"/>
</dbReference>
<dbReference type="NCBIfam" id="TIGR03319">
    <property type="entry name" value="RNase_Y"/>
    <property type="match status" value="1"/>
</dbReference>
<dbReference type="PANTHER" id="PTHR12826">
    <property type="entry name" value="RIBONUCLEASE Y"/>
    <property type="match status" value="1"/>
</dbReference>
<dbReference type="PANTHER" id="PTHR12826:SF15">
    <property type="entry name" value="RIBONUCLEASE Y"/>
    <property type="match status" value="1"/>
</dbReference>
<dbReference type="Pfam" id="PF01966">
    <property type="entry name" value="HD"/>
    <property type="match status" value="1"/>
</dbReference>
<dbReference type="Pfam" id="PF00013">
    <property type="entry name" value="KH_1"/>
    <property type="match status" value="1"/>
</dbReference>
<dbReference type="Pfam" id="PF12072">
    <property type="entry name" value="RNase_Y_N"/>
    <property type="match status" value="1"/>
</dbReference>
<dbReference type="SMART" id="SM00471">
    <property type="entry name" value="HDc"/>
    <property type="match status" value="1"/>
</dbReference>
<dbReference type="SMART" id="SM00322">
    <property type="entry name" value="KH"/>
    <property type="match status" value="1"/>
</dbReference>
<dbReference type="SUPFAM" id="SSF54791">
    <property type="entry name" value="Eukaryotic type KH-domain (KH-domain type I)"/>
    <property type="match status" value="1"/>
</dbReference>
<dbReference type="SUPFAM" id="SSF109604">
    <property type="entry name" value="HD-domain/PDEase-like"/>
    <property type="match status" value="1"/>
</dbReference>
<dbReference type="PROSITE" id="PS51831">
    <property type="entry name" value="HD"/>
    <property type="match status" value="1"/>
</dbReference>
<dbReference type="PROSITE" id="PS50084">
    <property type="entry name" value="KH_TYPE_1"/>
    <property type="match status" value="1"/>
</dbReference>
<sequence>MNLLSLLLILLGIILGVVGGYVVARNLLLQKQSQARQTAEDIVNQAHKEADNIKKEKLLEAKEENQILREQTEAELRERRSELQRQETRLLQKEENLERKSDLLDKKDEILEQKESKIEEKQQQVDAKESSVQTLIMKHEQELERISGLTQEEAINEQLQRVEEELSQDIAVLVKEKEKEAKEKVDKTAKELLATAVQRLAADHTSESTVSVVNLPNDEMKGRIIGREGRNIRTLETLTGIDLIIDDTPEAVILSGFDPIRREIARTALVNLVSDGRIHPGRIEDMVEKARKEVDDIIREAGEQATFEVNAHNMHPDLVKIVGRLNYRTSYGQNVLKHSIEVAHLASMLAAELGEDETLAKRAGLLHDVGKAIDHEVEGSHVEIGVELAKKYGENETVINAIHSHHGDVEPTSIISILVAAADALSAARPGARKETLENYIRRLERLETLSESYDGVEKAFAIQAGREIRVIVSPEEIDDLKSYRLARDIKNQIEDELQYPGHIKVTVVRETRAVEYAK</sequence>
<organism>
    <name type="scientific">Staphylococcus aureus (strain JH1)</name>
    <dbReference type="NCBI Taxonomy" id="359787"/>
    <lineage>
        <taxon>Bacteria</taxon>
        <taxon>Bacillati</taxon>
        <taxon>Bacillota</taxon>
        <taxon>Bacilli</taxon>
        <taxon>Bacillales</taxon>
        <taxon>Staphylococcaceae</taxon>
        <taxon>Staphylococcus</taxon>
    </lineage>
</organism>
<keyword id="KW-1003">Cell membrane</keyword>
<keyword id="KW-0255">Endonuclease</keyword>
<keyword id="KW-0378">Hydrolase</keyword>
<keyword id="KW-0472">Membrane</keyword>
<keyword id="KW-0540">Nuclease</keyword>
<keyword id="KW-0694">RNA-binding</keyword>
<keyword id="KW-0812">Transmembrane</keyword>
<keyword id="KW-1133">Transmembrane helix</keyword>
<keyword id="KW-0843">Virulence</keyword>
<evidence type="ECO:0000255" key="1">
    <source>
        <dbReference type="HAMAP-Rule" id="MF_00335"/>
    </source>
</evidence>
<evidence type="ECO:0000255" key="2">
    <source>
        <dbReference type="PROSITE-ProRule" id="PRU01175"/>
    </source>
</evidence>
<reference key="1">
    <citation type="submission" date="2007-06" db="EMBL/GenBank/DDBJ databases">
        <title>Complete sequence of chromosome of Staphylococcus aureus subsp. aureus JH1.</title>
        <authorList>
            <consortium name="US DOE Joint Genome Institute"/>
            <person name="Copeland A."/>
            <person name="Lucas S."/>
            <person name="Lapidus A."/>
            <person name="Barry K."/>
            <person name="Detter J.C."/>
            <person name="Glavina del Rio T."/>
            <person name="Hammon N."/>
            <person name="Israni S."/>
            <person name="Dalin E."/>
            <person name="Tice H."/>
            <person name="Pitluck S."/>
            <person name="Chain P."/>
            <person name="Malfatti S."/>
            <person name="Shin M."/>
            <person name="Vergez L."/>
            <person name="Schmutz J."/>
            <person name="Larimer F."/>
            <person name="Land M."/>
            <person name="Hauser L."/>
            <person name="Kyrpides N."/>
            <person name="Ivanova N."/>
            <person name="Tomasz A."/>
            <person name="Richardson P."/>
        </authorList>
    </citation>
    <scope>NUCLEOTIDE SEQUENCE [LARGE SCALE GENOMIC DNA]</scope>
    <source>
        <strain>JH1</strain>
    </source>
</reference>
<feature type="chain" id="PRO_0000344932" description="Ribonuclease Y">
    <location>
        <begin position="1"/>
        <end position="519"/>
    </location>
</feature>
<feature type="transmembrane region" description="Helical" evidence="1">
    <location>
        <begin position="3"/>
        <end position="23"/>
    </location>
</feature>
<feature type="domain" description="KH" evidence="1">
    <location>
        <begin position="209"/>
        <end position="269"/>
    </location>
</feature>
<feature type="domain" description="HD" evidence="2">
    <location>
        <begin position="335"/>
        <end position="428"/>
    </location>
</feature>
<accession>A6U1A5</accession>
<name>RNY_STAA2</name>
<comment type="function">
    <text evidence="1">Endoribonuclease that initiates mRNA decay.</text>
</comment>
<comment type="subcellular location">
    <subcellularLocation>
        <location evidence="1">Cell membrane</location>
        <topology evidence="1">Single-pass membrane protein</topology>
    </subcellularLocation>
</comment>
<comment type="similarity">
    <text evidence="1">Belongs to the RNase Y family.</text>
</comment>